<gene>
    <name type="primary">Crlf1</name>
    <name type="synonym">Crlm3</name>
</gene>
<name>CRLF1_MOUSE</name>
<keyword id="KW-1015">Disulfide bond</keyword>
<keyword id="KW-0325">Glycoprotein</keyword>
<keyword id="KW-0393">Immunoglobulin domain</keyword>
<keyword id="KW-0597">Phosphoprotein</keyword>
<keyword id="KW-0675">Receptor</keyword>
<keyword id="KW-1185">Reference proteome</keyword>
<keyword id="KW-0677">Repeat</keyword>
<keyword id="KW-0964">Secreted</keyword>
<keyword id="KW-0732">Signal</keyword>
<sequence length="425" mass="46662">MPAGRPGPVAQSARRPPRPLSSLWSPLLLCVLGVPRGGSGAHTAVISPQDPTLLIGSSLQATCSIHGDTPGATAEGLYWTLNGRRLPSELSRLLNTSTLALALANLNGSRQQSGDNLVCHARDGSILAGSCLYVGLPPEKPFNISCWSRNMKDLTCRWTPGAHGETFLHTNYSLKYKLRWYGQDNTCEEYHTVGPHSCHIPKDLALFTPYEIWVEATNRLGSARSDVLTLDVLDVVTTDPPPDVHVSRVGGLEDQLSVRWVSPPALKDFLFQAKYQIRYRVEDSVDWKVVDDVSNQTSCRLAGLKPGTVYFVQVRCNPFGIYGSKKAGIWSEWSHPTAASTPRSERPGPGGGVCEPRGGEPSSGPVRRELKQFLGWLKKHAYCSNLSFRLYDQWRAWMQKSHKTRNQDEGILPSGRRGAARGPAG</sequence>
<evidence type="ECO:0000250" key="1"/>
<evidence type="ECO:0000250" key="2">
    <source>
        <dbReference type="UniProtKB" id="O75462"/>
    </source>
</evidence>
<evidence type="ECO:0000255" key="3"/>
<evidence type="ECO:0000255" key="4">
    <source>
        <dbReference type="PROSITE-ProRule" id="PRU00316"/>
    </source>
</evidence>
<evidence type="ECO:0000256" key="5">
    <source>
        <dbReference type="SAM" id="MobiDB-lite"/>
    </source>
</evidence>
<evidence type="ECO:0000269" key="6">
    <source>
    </source>
</evidence>
<evidence type="ECO:0000269" key="7">
    <source>
    </source>
</evidence>
<evidence type="ECO:0000305" key="8"/>
<dbReference type="EMBL" id="AB040038">
    <property type="protein sequence ID" value="BAA92777.1"/>
    <property type="molecule type" value="mRNA"/>
</dbReference>
<dbReference type="CCDS" id="CCDS22369.1"/>
<dbReference type="RefSeq" id="NP_061297.1">
    <property type="nucleotide sequence ID" value="NM_018827.4"/>
</dbReference>
<dbReference type="SMR" id="Q9JM58"/>
<dbReference type="BioGRID" id="198889">
    <property type="interactions" value="1"/>
</dbReference>
<dbReference type="FunCoup" id="Q9JM58">
    <property type="interactions" value="47"/>
</dbReference>
<dbReference type="IntAct" id="Q9JM58">
    <property type="interactions" value="2"/>
</dbReference>
<dbReference type="MINT" id="Q9JM58"/>
<dbReference type="STRING" id="10090.ENSMUSP00000008032"/>
<dbReference type="GlyCosmos" id="Q9JM58">
    <property type="glycosylation" value="6 sites, No reported glycans"/>
</dbReference>
<dbReference type="GlyGen" id="Q9JM58">
    <property type="glycosylation" value="6 sites, 3 N-linked glycans (4 sites)"/>
</dbReference>
<dbReference type="iPTMnet" id="Q9JM58"/>
<dbReference type="PhosphoSitePlus" id="Q9JM58"/>
<dbReference type="PaxDb" id="10090-ENSMUSP00000008032"/>
<dbReference type="PeptideAtlas" id="Q9JM58"/>
<dbReference type="ProteomicsDB" id="278036"/>
<dbReference type="Antibodypedia" id="28115">
    <property type="antibodies" value="244 antibodies from 27 providers"/>
</dbReference>
<dbReference type="DNASU" id="12931"/>
<dbReference type="Ensembl" id="ENSMUST00000008032.14">
    <property type="protein sequence ID" value="ENSMUSP00000008032.8"/>
    <property type="gene ID" value="ENSMUSG00000007888.16"/>
</dbReference>
<dbReference type="GeneID" id="12931"/>
<dbReference type="KEGG" id="mmu:12931"/>
<dbReference type="UCSC" id="uc009maj.1">
    <property type="organism name" value="mouse"/>
</dbReference>
<dbReference type="AGR" id="MGI:1340030"/>
<dbReference type="CTD" id="9244"/>
<dbReference type="MGI" id="MGI:1340030">
    <property type="gene designation" value="Crlf1"/>
</dbReference>
<dbReference type="VEuPathDB" id="HostDB:ENSMUSG00000007888"/>
<dbReference type="eggNOG" id="KOG3656">
    <property type="taxonomic scope" value="Eukaryota"/>
</dbReference>
<dbReference type="GeneTree" id="ENSGT00940000156569"/>
<dbReference type="HOGENOM" id="CLU_017892_0_0_1"/>
<dbReference type="InParanoid" id="Q9JM58"/>
<dbReference type="OMA" id="PGVCEPK"/>
<dbReference type="OrthoDB" id="9404142at2759"/>
<dbReference type="PhylomeDB" id="Q9JM58"/>
<dbReference type="TreeFam" id="TF106501"/>
<dbReference type="Reactome" id="R-MMU-6788467">
    <property type="pathway name" value="IL-6-type cytokine receptor ligand interactions"/>
</dbReference>
<dbReference type="Reactome" id="R-MMU-9020956">
    <property type="pathway name" value="Interleukin-27 signaling"/>
</dbReference>
<dbReference type="BioGRID-ORCS" id="12931">
    <property type="hits" value="3 hits in 81 CRISPR screens"/>
</dbReference>
<dbReference type="PRO" id="PR:Q9JM58"/>
<dbReference type="Proteomes" id="UP000000589">
    <property type="component" value="Chromosome 8"/>
</dbReference>
<dbReference type="RNAct" id="Q9JM58">
    <property type="molecule type" value="protein"/>
</dbReference>
<dbReference type="Bgee" id="ENSMUSG00000007888">
    <property type="expression patterns" value="Expressed in metanephric ureteric bud and 151 other cell types or tissues"/>
</dbReference>
<dbReference type="ExpressionAtlas" id="Q9JM58">
    <property type="expression patterns" value="baseline and differential"/>
</dbReference>
<dbReference type="GO" id="GO:0097058">
    <property type="term" value="C:CRLF-CLCF1 complex"/>
    <property type="evidence" value="ECO:0000304"/>
    <property type="project" value="BHF-UCL"/>
</dbReference>
<dbReference type="GO" id="GO:0005615">
    <property type="term" value="C:extracellular space"/>
    <property type="evidence" value="ECO:0007005"/>
    <property type="project" value="BHF-UCL"/>
</dbReference>
<dbReference type="GO" id="GO:0005127">
    <property type="term" value="F:ciliary neurotrophic factor receptor binding"/>
    <property type="evidence" value="ECO:0007669"/>
    <property type="project" value="Ensembl"/>
</dbReference>
<dbReference type="GO" id="GO:0005125">
    <property type="term" value="F:cytokine activity"/>
    <property type="evidence" value="ECO:0007669"/>
    <property type="project" value="Ensembl"/>
</dbReference>
<dbReference type="GO" id="GO:0019955">
    <property type="term" value="F:cytokine binding"/>
    <property type="evidence" value="ECO:0007669"/>
    <property type="project" value="Ensembl"/>
</dbReference>
<dbReference type="GO" id="GO:0097696">
    <property type="term" value="P:cell surface receptor signaling pathway via STAT"/>
    <property type="evidence" value="ECO:0007669"/>
    <property type="project" value="Ensembl"/>
</dbReference>
<dbReference type="GO" id="GO:2000672">
    <property type="term" value="P:negative regulation of motor neuron apoptotic process"/>
    <property type="evidence" value="ECO:0000315"/>
    <property type="project" value="BHF-UCL"/>
</dbReference>
<dbReference type="GO" id="GO:0008284">
    <property type="term" value="P:positive regulation of cell population proliferation"/>
    <property type="evidence" value="ECO:0007669"/>
    <property type="project" value="Ensembl"/>
</dbReference>
<dbReference type="GO" id="GO:0001657">
    <property type="term" value="P:ureteric bud development"/>
    <property type="evidence" value="ECO:0000270"/>
    <property type="project" value="UniProtKB"/>
</dbReference>
<dbReference type="CDD" id="cd00063">
    <property type="entry name" value="FN3"/>
    <property type="match status" value="2"/>
</dbReference>
<dbReference type="FunFam" id="2.60.40.10:FF:000281">
    <property type="entry name" value="Cytokine receptor like factor 1"/>
    <property type="match status" value="1"/>
</dbReference>
<dbReference type="FunFam" id="2.60.40.10:FF:000386">
    <property type="entry name" value="Cytokine receptor like factor 1"/>
    <property type="match status" value="1"/>
</dbReference>
<dbReference type="FunFam" id="2.60.40.10:FF:000690">
    <property type="entry name" value="Cytokine receptor like factor 1"/>
    <property type="match status" value="1"/>
</dbReference>
<dbReference type="Gene3D" id="2.60.40.10">
    <property type="entry name" value="Immunoglobulins"/>
    <property type="match status" value="3"/>
</dbReference>
<dbReference type="InterPro" id="IPR003961">
    <property type="entry name" value="FN3_dom"/>
</dbReference>
<dbReference type="InterPro" id="IPR036116">
    <property type="entry name" value="FN3_sf"/>
</dbReference>
<dbReference type="InterPro" id="IPR015152">
    <property type="entry name" value="Growth/epo_recpt_lig-bind"/>
</dbReference>
<dbReference type="InterPro" id="IPR036179">
    <property type="entry name" value="Ig-like_dom_sf"/>
</dbReference>
<dbReference type="InterPro" id="IPR013783">
    <property type="entry name" value="Ig-like_fold"/>
</dbReference>
<dbReference type="InterPro" id="IPR050379">
    <property type="entry name" value="Type-I_Cytokine_Rcpt"/>
</dbReference>
<dbReference type="PANTHER" id="PTHR23036">
    <property type="entry name" value="CYTOKINE RECEPTOR"/>
    <property type="match status" value="1"/>
</dbReference>
<dbReference type="PANTHER" id="PTHR23036:SF16">
    <property type="entry name" value="CYTOKINE RECEPTOR-LIKE FACTOR 1"/>
    <property type="match status" value="1"/>
</dbReference>
<dbReference type="Pfam" id="PF09067">
    <property type="entry name" value="EpoR_lig-bind"/>
    <property type="match status" value="1"/>
</dbReference>
<dbReference type="Pfam" id="PF00041">
    <property type="entry name" value="fn3"/>
    <property type="match status" value="1"/>
</dbReference>
<dbReference type="SMART" id="SM00060">
    <property type="entry name" value="FN3"/>
    <property type="match status" value="2"/>
</dbReference>
<dbReference type="SUPFAM" id="SSF49265">
    <property type="entry name" value="Fibronectin type III"/>
    <property type="match status" value="2"/>
</dbReference>
<dbReference type="SUPFAM" id="SSF48726">
    <property type="entry name" value="Immunoglobulin"/>
    <property type="match status" value="1"/>
</dbReference>
<dbReference type="PROSITE" id="PS50853">
    <property type="entry name" value="FN3"/>
    <property type="match status" value="2"/>
</dbReference>
<feature type="signal peptide" evidence="3">
    <location>
        <begin position="1"/>
        <end position="33"/>
    </location>
</feature>
<feature type="chain" id="PRO_0000011040" description="Cytokine receptor-like factor 1">
    <location>
        <begin position="34"/>
        <end position="425"/>
    </location>
</feature>
<feature type="domain" description="Ig-like C2-type">
    <location>
        <begin position="35"/>
        <end position="134"/>
    </location>
</feature>
<feature type="domain" description="Fibronectin type-III 1" evidence="4">
    <location>
        <begin position="140"/>
        <end position="235"/>
    </location>
</feature>
<feature type="domain" description="Fibronectin type-III 2" evidence="4">
    <location>
        <begin position="240"/>
        <end position="344"/>
    </location>
</feature>
<feature type="region of interest" description="Disordered" evidence="5">
    <location>
        <begin position="335"/>
        <end position="366"/>
    </location>
</feature>
<feature type="region of interest" description="Disordered" evidence="5">
    <location>
        <begin position="402"/>
        <end position="425"/>
    </location>
</feature>
<feature type="short sequence motif" description="WSXWS motif">
    <location>
        <begin position="330"/>
        <end position="334"/>
    </location>
</feature>
<feature type="compositionally biased region" description="Low complexity" evidence="5">
    <location>
        <begin position="415"/>
        <end position="425"/>
    </location>
</feature>
<feature type="modified residue" description="Phosphoserine" evidence="7">
    <location>
        <position position="222"/>
    </location>
</feature>
<feature type="glycosylation site" description="N-linked (GlcNAc...) asparagine" evidence="3">
    <location>
        <position position="95"/>
    </location>
</feature>
<feature type="glycosylation site" description="N-linked (GlcNAc...) asparagine" evidence="3">
    <location>
        <position position="107"/>
    </location>
</feature>
<feature type="glycosylation site" description="N-linked (GlcNAc...) asparagine" evidence="3">
    <location>
        <position position="143"/>
    </location>
</feature>
<feature type="glycosylation site" description="N-linked (GlcNAc...) asparagine" evidence="3">
    <location>
        <position position="171"/>
    </location>
</feature>
<feature type="glycosylation site" description="N-linked (GlcNAc...) asparagine" evidence="3">
    <location>
        <position position="295"/>
    </location>
</feature>
<feature type="glycosylation site" description="N-linked (GlcNAc...) asparagine" evidence="3">
    <location>
        <position position="385"/>
    </location>
</feature>
<feature type="disulfide bond" evidence="1">
    <location>
        <begin position="146"/>
        <end position="156"/>
    </location>
</feature>
<feature type="disulfide bond" evidence="1">
    <location>
        <begin position="187"/>
        <end position="198"/>
    </location>
</feature>
<organism>
    <name type="scientific">Mus musculus</name>
    <name type="common">Mouse</name>
    <dbReference type="NCBI Taxonomy" id="10090"/>
    <lineage>
        <taxon>Eukaryota</taxon>
        <taxon>Metazoa</taxon>
        <taxon>Chordata</taxon>
        <taxon>Craniata</taxon>
        <taxon>Vertebrata</taxon>
        <taxon>Euteleostomi</taxon>
        <taxon>Mammalia</taxon>
        <taxon>Eutheria</taxon>
        <taxon>Euarchontoglires</taxon>
        <taxon>Glires</taxon>
        <taxon>Rodentia</taxon>
        <taxon>Myomorpha</taxon>
        <taxon>Muroidea</taxon>
        <taxon>Muridae</taxon>
        <taxon>Murinae</taxon>
        <taxon>Mus</taxon>
        <taxon>Mus</taxon>
    </lineage>
</organism>
<protein>
    <recommendedName>
        <fullName>Cytokine receptor-like factor 1</fullName>
    </recommendedName>
    <alternativeName>
        <fullName>Cytokine receptor-like molecule 3</fullName>
        <shortName>CRLM-3</shortName>
    </alternativeName>
    <alternativeName>
        <fullName>Cytokine-like factor 1</fullName>
        <shortName>CLF-1</shortName>
    </alternativeName>
    <alternativeName>
        <fullName>Novel cytokine receptor 6</fullName>
        <shortName>NR6</shortName>
    </alternativeName>
</protein>
<reference key="1">
    <citation type="submission" date="2000-03" db="EMBL/GenBank/DDBJ databases">
        <authorList>
            <person name="Hiroyama T."/>
            <person name="Iwama A."/>
            <person name="Nakamura Y."/>
            <person name="Nakauchi H."/>
        </authorList>
    </citation>
    <scope>NUCLEOTIDE SEQUENCE [MRNA]</scope>
</reference>
<reference key="2">
    <citation type="journal article" date="1999" name="Curr. Biol.">
        <title>Suckling defect in mice lacking the soluble haemopoietin receptor NR6.</title>
        <authorList>
            <person name="Alexander W.S."/>
            <person name="Rakar S."/>
            <person name="Robb L."/>
            <person name="Farley A."/>
            <person name="Willson T.A."/>
            <person name="Zhang J.-G."/>
            <person name="Hartley L."/>
            <person name="Kikuchi Y."/>
            <person name="Kojima T."/>
            <person name="Nomura H."/>
            <person name="Hasegawa M."/>
            <person name="Maeda M."/>
            <person name="Fabri L."/>
            <person name="Jachno K."/>
            <person name="Nash A."/>
            <person name="Metcalf D."/>
            <person name="Nicola N.A."/>
            <person name="Hilton D.J."/>
        </authorList>
    </citation>
    <scope>FUNCTION</scope>
    <scope>TISSUE SPECIFICITY</scope>
</reference>
<reference key="3">
    <citation type="journal article" date="2004" name="Rapid Commun. Mass Spectrom.">
        <title>Phosphoproteome analysis of mouse liver using immobilized metal affinity purification and linear ion trap mass spectrometry.</title>
        <authorList>
            <person name="Jin W.-H."/>
            <person name="Dai J."/>
            <person name="Zhou H."/>
            <person name="Xia Q.-C."/>
            <person name="Zou H.-F."/>
            <person name="Zeng R."/>
        </authorList>
    </citation>
    <scope>PHOSPHORYLATION AT SER-222</scope>
</reference>
<proteinExistence type="evidence at protein level"/>
<comment type="function">
    <text evidence="2 6">In complex with CLCF1, forms a heterodimeric neurotropic cytokine that plays a crucial role during neuronal development (By similarity). Plays a role in the initiation and/or maintenance of suckling in neonatal mice (PubMed:10359701). May also play a regulatory role in the immune system (By similarity).</text>
</comment>
<comment type="subunit">
    <text evidence="2">Forms covalent di- and tetramers. Forms a heteromeric complex with cardiotrophin-like cytokine CLCF1/CLC; the CRLF1-CLCF1 complex is a ligand for the ciliary neurotrophic factor receptor/CNTFR. The CRLF1-CLCF1 heterodimer, as well as tripartite signaling complex formed by CRLF1, CLCF1 and CNTFR bind SORL1 (via N-terminal ectodomain); within this complex, the interaction is mediated predominantly by the CRLF1 moiety.</text>
</comment>
<comment type="subcellular location">
    <subcellularLocation>
        <location evidence="1">Secreted</location>
    </subcellularLocation>
</comment>
<comment type="tissue specificity">
    <text evidence="6">Widely expressed in the embryo. Not detected in the brain of adult mice.</text>
</comment>
<comment type="domain">
    <text>The WSXWS motif appears to be necessary for proper protein folding and thereby efficient intracellular transport and cell-surface receptor binding.</text>
</comment>
<comment type="similarity">
    <text evidence="8">Belongs to the type I cytokine receptor family. Type 3 subfamily.</text>
</comment>
<accession>Q9JM58</accession>